<keyword id="KW-0002">3D-structure</keyword>
<keyword id="KW-0165">Cleavage on pair of basic residues</keyword>
<keyword id="KW-1015">Disulfide bond</keyword>
<keyword id="KW-0955">Glaucoma</keyword>
<keyword id="KW-0325">Glycoprotein</keyword>
<keyword id="KW-0339">Growth factor</keyword>
<keyword id="KW-1185">Reference proteome</keyword>
<keyword id="KW-0964">Secreted</keyword>
<keyword id="KW-0732">Signal</keyword>
<evidence type="ECO:0000250" key="1">
    <source>
        <dbReference type="UniProtKB" id="Q80VU4"/>
    </source>
</evidence>
<evidence type="ECO:0000255" key="2"/>
<evidence type="ECO:0000269" key="3">
    <source>
    </source>
</evidence>
<evidence type="ECO:0000269" key="4">
    <source>
    </source>
</evidence>
<evidence type="ECO:0000269" key="5">
    <source>
    </source>
</evidence>
<evidence type="ECO:0000305" key="6"/>
<evidence type="ECO:0007829" key="7">
    <source>
        <dbReference type="PDB" id="1B98"/>
    </source>
</evidence>
<evidence type="ECO:0007829" key="8">
    <source>
        <dbReference type="PDB" id="1HCF"/>
    </source>
</evidence>
<sequence length="210" mass="22427">MLPLPSCSLPILLLFLLPSVPIESQPPPSTLPPFLAPEWDLLSPRVVLSRGAPAGPPLLFLLEAGAFRESAGAPANRSRRGVSETAPASRRGELAVCDAVSGWVTDRRTAVDLRGREVEVLGEVPAAGGSPLRQYFFETRCKADNAEEGGPGAGGGGCRGVDRRHWVSECKAKQSYVRALTADAQGRVGWRWIRIDTACVCTLLSRTGRA</sequence>
<name>NTF4_HUMAN</name>
<comment type="function">
    <text evidence="1 3">Target-derived survival factor for peripheral sensory sympathetic neurons (PubMed:1742028). May promote ameloblast differentiation and subsequent reduction in proliferation of ameloblasts (By similarity).</text>
</comment>
<comment type="interaction">
    <interactant intactId="EBI-3907456">
        <id>P34130</id>
    </interactant>
    <interactant intactId="EBI-10173507">
        <id>Q6UY14-3</id>
        <label>ADAMTSL4</label>
    </interactant>
    <organismsDiffer>false</organismsDiffer>
    <experiments>3</experiments>
</comment>
<comment type="interaction">
    <interactant intactId="EBI-3907456">
        <id>P34130</id>
    </interactant>
    <interactant intactId="EBI-1026003">
        <id>P23560</id>
        <label>BDNF</label>
    </interactant>
    <organismsDiffer>false</organismsDiffer>
    <experiments>6</experiments>
</comment>
<comment type="interaction">
    <interactant intactId="EBI-3907456">
        <id>P34130</id>
    </interactant>
    <interactant intactId="EBI-748171">
        <id>O43186</id>
        <label>CRX</label>
    </interactant>
    <organismsDiffer>false</organismsDiffer>
    <experiments>3</experiments>
</comment>
<comment type="interaction">
    <interactant intactId="EBI-3907456">
        <id>P34130</id>
    </interactant>
    <interactant intactId="EBI-374781">
        <id>O76003</id>
        <label>GLRX3</label>
    </interactant>
    <organismsDiffer>false</organismsDiffer>
    <experiments>3</experiments>
</comment>
<comment type="interaction">
    <interactant intactId="EBI-3907456">
        <id>P34130</id>
    </interactant>
    <interactant intactId="EBI-2130449">
        <id>Q6AZZ1</id>
        <label>TRIM68</label>
    </interactant>
    <organismsDiffer>false</organismsDiffer>
    <experiments>2</experiments>
</comment>
<comment type="subcellular location">
    <subcellularLocation>
        <location evidence="3">Secreted</location>
    </subcellularLocation>
</comment>
<comment type="tissue specificity">
    <text>Highest levels in prostate, lower levels in thymus, placenta, and skeletal muscle. Expressed in embryonic and adult tissues.</text>
</comment>
<comment type="disease" evidence="4 5">
    <disease id="DI-02594">
        <name>Glaucoma 1, open angle, O</name>
        <acronym>GLC1O</acronym>
        <description>A form of primary open angle glaucoma (POAG). POAG is characterized by a specific pattern of optic nerve and visual field defects. The angle of the anterior chamber of the eye is open, and usually the intraocular pressure is increased. However, glaucoma can occur at any intraocular pressure. The disease is generally asymptomatic until the late stages, by which time significant and irreversible optic nerve damage has already taken place.</description>
        <dbReference type="MIM" id="613100"/>
    </disease>
    <text>Disease susceptibility may be associated with variants affecting the gene represented in this entry.</text>
</comment>
<comment type="similarity">
    <text evidence="6">Belongs to the NGF-beta family.</text>
</comment>
<dbReference type="EMBL" id="M86528">
    <property type="protein sequence ID" value="AAA60154.1"/>
    <property type="molecule type" value="Genomic_DNA"/>
</dbReference>
<dbReference type="EMBL" id="BT019368">
    <property type="protein sequence ID" value="AAV38175.1"/>
    <property type="molecule type" value="mRNA"/>
</dbReference>
<dbReference type="EMBL" id="BT019369">
    <property type="protein sequence ID" value="AAV38176.1"/>
    <property type="molecule type" value="mRNA"/>
</dbReference>
<dbReference type="EMBL" id="CR541900">
    <property type="protein sequence ID" value="CAG46698.1"/>
    <property type="molecule type" value="mRNA"/>
</dbReference>
<dbReference type="EMBL" id="BC012421">
    <property type="protein sequence ID" value="AAH12421.1"/>
    <property type="molecule type" value="mRNA"/>
</dbReference>
<dbReference type="CCDS" id="CCDS12754.1"/>
<dbReference type="PIR" id="A42687">
    <property type="entry name" value="A42687"/>
</dbReference>
<dbReference type="RefSeq" id="NP_001382418.1">
    <property type="nucleotide sequence ID" value="NM_001395489.1"/>
</dbReference>
<dbReference type="RefSeq" id="NP_006170.1">
    <property type="nucleotide sequence ID" value="NM_006179.5"/>
</dbReference>
<dbReference type="RefSeq" id="XP_005259019.1">
    <property type="nucleotide sequence ID" value="XM_005258962.3"/>
</dbReference>
<dbReference type="RefSeq" id="XP_006723295.1">
    <property type="nucleotide sequence ID" value="XM_006723232.3"/>
</dbReference>
<dbReference type="RefSeq" id="XP_011525311.1">
    <property type="nucleotide sequence ID" value="XM_011527009.3"/>
</dbReference>
<dbReference type="RefSeq" id="XP_011525312.1">
    <property type="nucleotide sequence ID" value="XM_011527010.2"/>
</dbReference>
<dbReference type="RefSeq" id="XP_047294847.1">
    <property type="nucleotide sequence ID" value="XM_047438891.1"/>
</dbReference>
<dbReference type="RefSeq" id="XP_047294848.1">
    <property type="nucleotide sequence ID" value="XM_047438892.1"/>
</dbReference>
<dbReference type="RefSeq" id="XP_054177097.1">
    <property type="nucleotide sequence ID" value="XM_054321122.1"/>
</dbReference>
<dbReference type="RefSeq" id="XP_054177098.1">
    <property type="nucleotide sequence ID" value="XM_054321123.1"/>
</dbReference>
<dbReference type="RefSeq" id="XP_054177099.1">
    <property type="nucleotide sequence ID" value="XM_054321124.1"/>
</dbReference>
<dbReference type="PDB" id="1B8M">
    <property type="method" value="X-ray"/>
    <property type="resolution" value="2.75 A"/>
    <property type="chains" value="B=81-210"/>
</dbReference>
<dbReference type="PDB" id="1B98">
    <property type="method" value="X-ray"/>
    <property type="resolution" value="2.75 A"/>
    <property type="chains" value="A/M=81-210"/>
</dbReference>
<dbReference type="PDB" id="1HCF">
    <property type="method" value="X-ray"/>
    <property type="resolution" value="2.70 A"/>
    <property type="chains" value="A/B=81-210"/>
</dbReference>
<dbReference type="PDBsum" id="1B8M"/>
<dbReference type="PDBsum" id="1B98"/>
<dbReference type="PDBsum" id="1HCF"/>
<dbReference type="SMR" id="P34130"/>
<dbReference type="BioGRID" id="110964">
    <property type="interactions" value="15"/>
</dbReference>
<dbReference type="CORUM" id="P34130"/>
<dbReference type="FunCoup" id="P34130">
    <property type="interactions" value="669"/>
</dbReference>
<dbReference type="IntAct" id="P34130">
    <property type="interactions" value="8"/>
</dbReference>
<dbReference type="STRING" id="9606.ENSP00000469455"/>
<dbReference type="GlyCosmos" id="P34130">
    <property type="glycosylation" value="1 site, No reported glycans"/>
</dbReference>
<dbReference type="GlyGen" id="P34130">
    <property type="glycosylation" value="1 site"/>
</dbReference>
<dbReference type="iPTMnet" id="P34130"/>
<dbReference type="PhosphoSitePlus" id="P34130"/>
<dbReference type="BioMuta" id="NTF4"/>
<dbReference type="PaxDb" id="9606-ENSP00000469455"/>
<dbReference type="PeptideAtlas" id="P34130"/>
<dbReference type="Antibodypedia" id="65111">
    <property type="antibodies" value="647 antibodies from 42 providers"/>
</dbReference>
<dbReference type="DNASU" id="4909"/>
<dbReference type="Ensembl" id="ENST00000593537.2">
    <property type="protein sequence ID" value="ENSP00000469455.1"/>
    <property type="gene ID" value="ENSG00000225950.9"/>
</dbReference>
<dbReference type="Ensembl" id="ENST00000594938.2">
    <property type="protein sequence ID" value="ENSP00000512387.1"/>
    <property type="gene ID" value="ENSG00000225950.9"/>
</dbReference>
<dbReference type="Ensembl" id="ENST00000595857.6">
    <property type="protein sequence ID" value="ENSP00000471508.2"/>
    <property type="gene ID" value="ENSG00000225950.9"/>
</dbReference>
<dbReference type="Ensembl" id="ENST00000696088.1">
    <property type="protein sequence ID" value="ENSP00000512384.1"/>
    <property type="gene ID" value="ENSG00000225950.9"/>
</dbReference>
<dbReference type="Ensembl" id="ENST00000696089.1">
    <property type="protein sequence ID" value="ENSP00000512385.1"/>
    <property type="gene ID" value="ENSG00000225950.9"/>
</dbReference>
<dbReference type="Ensembl" id="ENST00000696090.1">
    <property type="protein sequence ID" value="ENSP00000512386.1"/>
    <property type="gene ID" value="ENSG00000225950.9"/>
</dbReference>
<dbReference type="Ensembl" id="ENST00000696091.1">
    <property type="protein sequence ID" value="ENSP00000512388.1"/>
    <property type="gene ID" value="ENSG00000225950.9"/>
</dbReference>
<dbReference type="GeneID" id="4909"/>
<dbReference type="KEGG" id="hsa:4909"/>
<dbReference type="MANE-Select" id="ENST00000593537.2">
    <property type="protein sequence ID" value="ENSP00000469455.1"/>
    <property type="RefSeq nucleotide sequence ID" value="NM_006179.5"/>
    <property type="RefSeq protein sequence ID" value="NP_006170.1"/>
</dbReference>
<dbReference type="UCSC" id="uc061ayz.1">
    <property type="organism name" value="human"/>
</dbReference>
<dbReference type="AGR" id="HGNC:8024"/>
<dbReference type="CTD" id="4909"/>
<dbReference type="DisGeNET" id="4909"/>
<dbReference type="GeneCards" id="NTF4"/>
<dbReference type="HGNC" id="HGNC:8024">
    <property type="gene designation" value="NTF4"/>
</dbReference>
<dbReference type="HPA" id="ENSG00000225950">
    <property type="expression patterns" value="Tissue enhanced (prostate, skeletal muscle, skin)"/>
</dbReference>
<dbReference type="MalaCards" id="NTF4"/>
<dbReference type="MIM" id="162662">
    <property type="type" value="gene"/>
</dbReference>
<dbReference type="MIM" id="613100">
    <property type="type" value="phenotype"/>
</dbReference>
<dbReference type="neXtProt" id="NX_P34130"/>
<dbReference type="OpenTargets" id="ENSG00000225950"/>
<dbReference type="PharmGKB" id="PA162398206"/>
<dbReference type="VEuPathDB" id="HostDB:ENSG00000225950"/>
<dbReference type="eggNOG" id="ENOG502R4FK">
    <property type="taxonomic scope" value="Eukaryota"/>
</dbReference>
<dbReference type="GeneTree" id="ENSGT00390000007725"/>
<dbReference type="HOGENOM" id="CLU_059942_2_1_1"/>
<dbReference type="InParanoid" id="P34130"/>
<dbReference type="OMA" id="WNLYSPR"/>
<dbReference type="OrthoDB" id="6491780at2759"/>
<dbReference type="PAN-GO" id="P34130">
    <property type="GO annotations" value="16 GO annotations based on evolutionary models"/>
</dbReference>
<dbReference type="PhylomeDB" id="P34130"/>
<dbReference type="TreeFam" id="TF106463"/>
<dbReference type="PathwayCommons" id="P34130"/>
<dbReference type="Reactome" id="R-HSA-1257604">
    <property type="pathway name" value="PIP3 activates AKT signaling"/>
</dbReference>
<dbReference type="Reactome" id="R-HSA-2219530">
    <property type="pathway name" value="Constitutive Signaling by Aberrant PI3K in Cancer"/>
</dbReference>
<dbReference type="Reactome" id="R-HSA-6811558">
    <property type="pathway name" value="PI5P, PP2A and IER3 Regulate PI3K/AKT Signaling"/>
</dbReference>
<dbReference type="Reactome" id="R-HSA-9026357">
    <property type="pathway name" value="NTF4 activates NTRK2 (TRKB) signaling"/>
</dbReference>
<dbReference type="Reactome" id="R-HSA-9026519">
    <property type="pathway name" value="Activated NTRK2 signals through RAS"/>
</dbReference>
<dbReference type="Reactome" id="R-HSA-9026527">
    <property type="pathway name" value="Activated NTRK2 signals through PLCG1"/>
</dbReference>
<dbReference type="Reactome" id="R-HSA-9028335">
    <property type="pathway name" value="Activated NTRK2 signals through PI3K"/>
</dbReference>
<dbReference type="Reactome" id="R-HSA-9028731">
    <property type="pathway name" value="Activated NTRK2 signals through FRS2 and FRS3"/>
</dbReference>
<dbReference type="SignaLink" id="P34130"/>
<dbReference type="SIGNOR" id="P34130"/>
<dbReference type="BioGRID-ORCS" id="4909">
    <property type="hits" value="23 hits in 1145 CRISPR screens"/>
</dbReference>
<dbReference type="EvolutionaryTrace" id="P34130"/>
<dbReference type="GenomeRNAi" id="4909"/>
<dbReference type="Pharos" id="P34130">
    <property type="development level" value="Tbio"/>
</dbReference>
<dbReference type="PRO" id="PR:P34130"/>
<dbReference type="Proteomes" id="UP000005640">
    <property type="component" value="Chromosome 19"/>
</dbReference>
<dbReference type="RNAct" id="P34130">
    <property type="molecule type" value="protein"/>
</dbReference>
<dbReference type="Bgee" id="ENSG00000225950">
    <property type="expression patterns" value="Expressed in male germ line stem cell (sensu Vertebrata) in testis and 69 other cell types or tissues"/>
</dbReference>
<dbReference type="ExpressionAtlas" id="P34130">
    <property type="expression patterns" value="baseline and differential"/>
</dbReference>
<dbReference type="GO" id="GO:0030424">
    <property type="term" value="C:axon"/>
    <property type="evidence" value="ECO:0000318"/>
    <property type="project" value="GO_Central"/>
</dbReference>
<dbReference type="GO" id="GO:0030425">
    <property type="term" value="C:dendrite"/>
    <property type="evidence" value="ECO:0000318"/>
    <property type="project" value="GO_Central"/>
</dbReference>
<dbReference type="GO" id="GO:0005576">
    <property type="term" value="C:extracellular region"/>
    <property type="evidence" value="ECO:0000304"/>
    <property type="project" value="Reactome"/>
</dbReference>
<dbReference type="GO" id="GO:0005615">
    <property type="term" value="C:extracellular space"/>
    <property type="evidence" value="ECO:0000318"/>
    <property type="project" value="GO_Central"/>
</dbReference>
<dbReference type="GO" id="GO:0008021">
    <property type="term" value="C:synaptic vesicle"/>
    <property type="evidence" value="ECO:0000318"/>
    <property type="project" value="GO_Central"/>
</dbReference>
<dbReference type="GO" id="GO:0008083">
    <property type="term" value="F:growth factor activity"/>
    <property type="evidence" value="ECO:0000318"/>
    <property type="project" value="GO_Central"/>
</dbReference>
<dbReference type="GO" id="GO:0005163">
    <property type="term" value="F:nerve growth factor receptor binding"/>
    <property type="evidence" value="ECO:0000318"/>
    <property type="project" value="GO_Central"/>
</dbReference>
<dbReference type="GO" id="GO:0008344">
    <property type="term" value="P:adult locomotory behavior"/>
    <property type="evidence" value="ECO:0000250"/>
    <property type="project" value="UniProtKB"/>
</dbReference>
<dbReference type="GO" id="GO:0036305">
    <property type="term" value="P:ameloblast differentiation"/>
    <property type="evidence" value="ECO:0000250"/>
    <property type="project" value="UniProtKB"/>
</dbReference>
<dbReference type="GO" id="GO:0007169">
    <property type="term" value="P:cell surface receptor protein tyrosine kinase signaling pathway"/>
    <property type="evidence" value="ECO:0000318"/>
    <property type="project" value="GO_Central"/>
</dbReference>
<dbReference type="GO" id="GO:0008544">
    <property type="term" value="P:epidermis development"/>
    <property type="evidence" value="ECO:0000250"/>
    <property type="project" value="UniProtKB"/>
</dbReference>
<dbReference type="GO" id="GO:0007402">
    <property type="term" value="P:ganglion mother cell fate determination"/>
    <property type="evidence" value="ECO:0000250"/>
    <property type="project" value="UniProtKB"/>
</dbReference>
<dbReference type="GO" id="GO:0060384">
    <property type="term" value="P:innervation"/>
    <property type="evidence" value="ECO:0007669"/>
    <property type="project" value="Ensembl"/>
</dbReference>
<dbReference type="GO" id="GO:0007616">
    <property type="term" value="P:long-term memory"/>
    <property type="evidence" value="ECO:0000250"/>
    <property type="project" value="UniProtKB"/>
</dbReference>
<dbReference type="GO" id="GO:0042490">
    <property type="term" value="P:mechanoreceptor differentiation"/>
    <property type="evidence" value="ECO:0007669"/>
    <property type="project" value="Ensembl"/>
</dbReference>
<dbReference type="GO" id="GO:0050804">
    <property type="term" value="P:modulation of chemical synaptic transmission"/>
    <property type="evidence" value="ECO:0000318"/>
    <property type="project" value="GO_Central"/>
</dbReference>
<dbReference type="GO" id="GO:0043524">
    <property type="term" value="P:negative regulation of neuron apoptotic process"/>
    <property type="evidence" value="ECO:0000318"/>
    <property type="project" value="GO_Central"/>
</dbReference>
<dbReference type="GO" id="GO:0021675">
    <property type="term" value="P:nerve development"/>
    <property type="evidence" value="ECO:0000318"/>
    <property type="project" value="GO_Central"/>
</dbReference>
<dbReference type="GO" id="GO:0038180">
    <property type="term" value="P:nerve growth factor signaling pathway"/>
    <property type="evidence" value="ECO:0000318"/>
    <property type="project" value="GO_Central"/>
</dbReference>
<dbReference type="GO" id="GO:0048812">
    <property type="term" value="P:neuron projection morphogenesis"/>
    <property type="evidence" value="ECO:0000318"/>
    <property type="project" value="GO_Central"/>
</dbReference>
<dbReference type="GO" id="GO:0008052">
    <property type="term" value="P:sensory organ boundary specification"/>
    <property type="evidence" value="ECO:0000250"/>
    <property type="project" value="UniProtKB"/>
</dbReference>
<dbReference type="GO" id="GO:0061193">
    <property type="term" value="P:taste bud development"/>
    <property type="evidence" value="ECO:0007669"/>
    <property type="project" value="Ensembl"/>
</dbReference>
<dbReference type="FunFam" id="2.10.90.10:FF:000002">
    <property type="entry name" value="Brain-derived neurotrophic factor"/>
    <property type="match status" value="1"/>
</dbReference>
<dbReference type="Gene3D" id="2.10.90.10">
    <property type="entry name" value="Cystine-knot cytokines"/>
    <property type="match status" value="1"/>
</dbReference>
<dbReference type="InterPro" id="IPR029034">
    <property type="entry name" value="Cystine-knot_cytokine"/>
</dbReference>
<dbReference type="InterPro" id="IPR020408">
    <property type="entry name" value="Nerve_growth_factor-like"/>
</dbReference>
<dbReference type="InterPro" id="IPR002072">
    <property type="entry name" value="Nerve_growth_factor-rel"/>
</dbReference>
<dbReference type="InterPro" id="IPR019846">
    <property type="entry name" value="Nerve_growth_factor_CS"/>
</dbReference>
<dbReference type="InterPro" id="IPR020432">
    <property type="entry name" value="Neurotrophin-4"/>
</dbReference>
<dbReference type="PANTHER" id="PTHR11589">
    <property type="entry name" value="NERVE GROWTH FACTOR NGF -RELATED"/>
    <property type="match status" value="1"/>
</dbReference>
<dbReference type="PANTHER" id="PTHR11589:SF8">
    <property type="entry name" value="NEUROTROPHIN-4"/>
    <property type="match status" value="1"/>
</dbReference>
<dbReference type="Pfam" id="PF00243">
    <property type="entry name" value="NGF"/>
    <property type="match status" value="1"/>
</dbReference>
<dbReference type="PIRSF" id="PIRSF001789">
    <property type="entry name" value="NGF"/>
    <property type="match status" value="1"/>
</dbReference>
<dbReference type="PRINTS" id="PR01915">
    <property type="entry name" value="NEUROTROPHN4"/>
</dbReference>
<dbReference type="PRINTS" id="PR00268">
    <property type="entry name" value="NGF"/>
</dbReference>
<dbReference type="SMART" id="SM00140">
    <property type="entry name" value="NGF"/>
    <property type="match status" value="1"/>
</dbReference>
<dbReference type="SUPFAM" id="SSF57501">
    <property type="entry name" value="Cystine-knot cytokines"/>
    <property type="match status" value="1"/>
</dbReference>
<dbReference type="PROSITE" id="PS00248">
    <property type="entry name" value="NGF_1"/>
    <property type="match status" value="1"/>
</dbReference>
<dbReference type="PROSITE" id="PS50270">
    <property type="entry name" value="NGF_2"/>
    <property type="match status" value="1"/>
</dbReference>
<reference key="1">
    <citation type="journal article" date="1991" name="Neuron">
        <title>Neurotrophin-5: a novel neurotrophic factor that activates trk and trkB.</title>
        <authorList>
            <person name="Berkemeier L.R."/>
            <person name="Winslow J.W."/>
            <person name="Kaplan D.R."/>
            <person name="Nikolics K."/>
            <person name="Goeddel D.V."/>
            <person name="Rosenthal A."/>
        </authorList>
    </citation>
    <scope>NUCLEOTIDE SEQUENCE [MRNA]</scope>
    <scope>FUNCTION</scope>
    <scope>SUBCELLULAR LOCATION</scope>
</reference>
<reference key="2">
    <citation type="journal article" date="1992" name="Proc. Natl. Acad. Sci. U.S.A.">
        <title>Mammalian neurotrophin-4: structure, chromosomal localization, tissue distribution, and receptor specificity.</title>
        <authorList>
            <person name="Ip N.Y."/>
            <person name="Ibanez C.F."/>
            <person name="Nye S.H."/>
            <person name="McClain J."/>
            <person name="Jones P.F."/>
            <person name="Gies D.R."/>
            <person name="Belluscio L."/>
            <person name="le Beau M.M."/>
            <person name="Espinosa R. III"/>
            <person name="Squinto S.P."/>
            <person name="Persson H."/>
            <person name="Yancopoulos G.D."/>
        </authorList>
    </citation>
    <scope>NUCLEOTIDE SEQUENCE [GENOMIC DNA]</scope>
    <source>
        <tissue>Prostate</tissue>
    </source>
</reference>
<reference key="3">
    <citation type="submission" date="2003-05" db="EMBL/GenBank/DDBJ databases">
        <title>Cloning of human full-length CDSs in BD Creator(TM) system donor vector.</title>
        <authorList>
            <person name="Kalnine N."/>
            <person name="Chen X."/>
            <person name="Rolfs A."/>
            <person name="Halleck A."/>
            <person name="Hines L."/>
            <person name="Eisenstein S."/>
            <person name="Koundinya M."/>
            <person name="Raphael J."/>
            <person name="Moreira D."/>
            <person name="Kelley T."/>
            <person name="LaBaer J."/>
            <person name="Lin Y."/>
            <person name="Phelan M."/>
            <person name="Farmer A."/>
        </authorList>
    </citation>
    <scope>NUCLEOTIDE SEQUENCE [LARGE SCALE MRNA]</scope>
</reference>
<reference key="4">
    <citation type="submission" date="2004-06" db="EMBL/GenBank/DDBJ databases">
        <title>Cloning of human full open reading frames in Gateway(TM) system entry vector (pDONR201).</title>
        <authorList>
            <person name="Ebert L."/>
            <person name="Schick M."/>
            <person name="Neubert P."/>
            <person name="Schatten R."/>
            <person name="Henze S."/>
            <person name="Korn B."/>
        </authorList>
    </citation>
    <scope>NUCLEOTIDE SEQUENCE [LARGE SCALE MRNA]</scope>
</reference>
<reference key="5">
    <citation type="journal article" date="2004" name="Genome Res.">
        <title>The status, quality, and expansion of the NIH full-length cDNA project: the Mammalian Gene Collection (MGC).</title>
        <authorList>
            <consortium name="The MGC Project Team"/>
        </authorList>
    </citation>
    <scope>NUCLEOTIDE SEQUENCE [LARGE SCALE MRNA]</scope>
    <source>
        <tissue>Ovary</tissue>
    </source>
</reference>
<reference key="6">
    <citation type="journal article" date="1999" name="Protein Sci.">
        <title>The structures of the neurotrophin 4 homodimer and the brain-derived neurotrophic factor/neurotrophin 4 heterodimer reveal a common Trk-binding site.</title>
        <authorList>
            <person name="Robinson R.C."/>
            <person name="Radziejewski C."/>
            <person name="Spraggon G."/>
            <person name="Greenwald J."/>
            <person name="Kostura M.R."/>
            <person name="Burtnick L.D."/>
            <person name="Stuart D.I."/>
            <person name="Choe S."/>
            <person name="Jones E.Y."/>
        </authorList>
    </citation>
    <scope>X-RAY CRYSTALLOGRAPHY (2.75 ANGSTROMS)</scope>
</reference>
<reference key="7">
    <citation type="journal article" date="2009" name="Am. J. Hum. Genet.">
        <title>Heterozygous NTF4 mutations impairing neurotrophin-4 signaling in patients with primary open-angle glaucoma.</title>
        <authorList>
            <person name="Pasutto F."/>
            <person name="Matsumoto T."/>
            <person name="Mardin C.Y."/>
            <person name="Sticht H."/>
            <person name="Brandstatter J.H."/>
            <person name="Michels-Rautenstrauss K."/>
            <person name="Weisschuh N."/>
            <person name="Gramer E."/>
            <person name="Ramdas W.D."/>
            <person name="van Koolwijk L.M."/>
            <person name="Klaver C.C."/>
            <person name="Vingerling J.R."/>
            <person name="Weber B.H."/>
            <person name="Kruse F.E."/>
            <person name="Rautenstrauss B."/>
            <person name="Barde Y.A."/>
            <person name="Reis A."/>
        </authorList>
    </citation>
    <scope>INVOLVEMENT IN SUSCEPTIBILITY TO GLAUCOMA</scope>
    <scope>VARIANTS GLC1O TYR-7; LYS-84; HIS-90; TRP-206; GLN-206 AND GLY-209</scope>
    <scope>VARIANTS VAL-88 AND SER-207</scope>
    <scope>CHARACTERIZATION OF VARIANT GLC1O TRP-206</scope>
</reference>
<reference key="8">
    <citation type="journal article" date="2010" name="Am. J. Hum. Genet.">
        <title>No evidence of association of heterozygous NTF4 mutations in patients with primary open-angle glaucoma.</title>
        <authorList>
            <person name="Liu Y."/>
            <person name="Liu W."/>
            <person name="Crooks K."/>
            <person name="Schmidt S."/>
            <person name="Allingham R.R."/>
            <person name="Hauser M.A."/>
        </authorList>
    </citation>
    <scope>VARIANTS VAL-88; ASN-89; CYS-90; GLY-114; HIS-133; CYS-140; TRP-206 AND ILE-207</scope>
    <scope>DISCUSSION OF ASSOCIATION WITH GLAUCOMA</scope>
</reference>
<protein>
    <recommendedName>
        <fullName>Neurotrophin-4</fullName>
        <shortName>NT-4</shortName>
    </recommendedName>
    <alternativeName>
        <fullName>Neurotrophin-5</fullName>
        <shortName>NT-5</shortName>
    </alternativeName>
    <alternativeName>
        <fullName>Neutrophic factor 4</fullName>
    </alternativeName>
</protein>
<gene>
    <name type="primary">NTF4</name>
    <name type="synonym">NTF5</name>
</gene>
<proteinExistence type="evidence at protein level"/>
<organism>
    <name type="scientific">Homo sapiens</name>
    <name type="common">Human</name>
    <dbReference type="NCBI Taxonomy" id="9606"/>
    <lineage>
        <taxon>Eukaryota</taxon>
        <taxon>Metazoa</taxon>
        <taxon>Chordata</taxon>
        <taxon>Craniata</taxon>
        <taxon>Vertebrata</taxon>
        <taxon>Euteleostomi</taxon>
        <taxon>Mammalia</taxon>
        <taxon>Eutheria</taxon>
        <taxon>Euarchontoglires</taxon>
        <taxon>Primates</taxon>
        <taxon>Haplorrhini</taxon>
        <taxon>Catarrhini</taxon>
        <taxon>Hominidae</taxon>
        <taxon>Homo</taxon>
    </lineage>
</organism>
<accession>P34130</accession>
<accession>Q6FH56</accession>
<feature type="signal peptide" evidence="2">
    <location>
        <begin position="1"/>
        <end position="24"/>
    </location>
</feature>
<feature type="propeptide" id="PRO_0000019669">
    <location>
        <begin position="25"/>
        <end position="80"/>
    </location>
</feature>
<feature type="chain" id="PRO_0000019670" description="Neurotrophin-4">
    <location>
        <begin position="81"/>
        <end position="210"/>
    </location>
</feature>
<feature type="glycosylation site" description="N-linked (GlcNAc...) asparagine" evidence="2">
    <location>
        <position position="76"/>
    </location>
</feature>
<feature type="disulfide bond">
    <location>
        <begin position="97"/>
        <end position="170"/>
    </location>
</feature>
<feature type="disulfide bond">
    <location>
        <begin position="141"/>
        <end position="199"/>
    </location>
</feature>
<feature type="disulfide bond">
    <location>
        <begin position="158"/>
        <end position="201"/>
    </location>
</feature>
<feature type="sequence variant" id="VAR_063196" description="In GLC1O; uncertain significance." evidence="4">
    <original>C</original>
    <variation>Y</variation>
    <location>
        <position position="7"/>
    </location>
</feature>
<feature type="sequence variant" id="VAR_063197" description="In GLC1O; uncertain significance; dbSNP:rs756962734." evidence="4">
    <original>E</original>
    <variation>K</variation>
    <location>
        <position position="84"/>
    </location>
</feature>
<feature type="sequence variant" id="VAR_063198" description="In dbSNP:rs61732310." evidence="4 5">
    <original>A</original>
    <variation>V</variation>
    <location>
        <position position="88"/>
    </location>
</feature>
<feature type="sequence variant" id="VAR_063199" description="In dbSNP:rs374367338." evidence="5">
    <original>S</original>
    <variation>N</variation>
    <location>
        <position position="89"/>
    </location>
</feature>
<feature type="sequence variant" id="VAR_063200" description="In dbSNP:rs751743400." evidence="5">
    <original>R</original>
    <variation>C</variation>
    <location>
        <position position="90"/>
    </location>
</feature>
<feature type="sequence variant" id="VAR_063201" description="In GLC1O; uncertain significance; dbSNP:rs766504681." evidence="4">
    <original>R</original>
    <variation>H</variation>
    <location>
        <position position="90"/>
    </location>
</feature>
<feature type="sequence variant" id="VAR_063202" description="In dbSNP:rs377553005." evidence="5">
    <original>R</original>
    <variation>G</variation>
    <location>
        <position position="114"/>
    </location>
</feature>
<feature type="sequence variant" id="VAR_063203" description="In dbSNP:rs977260366." evidence="5">
    <original>R</original>
    <variation>H</variation>
    <location>
        <position position="133"/>
    </location>
</feature>
<feature type="sequence variant" id="VAR_063204" description="In dbSNP:rs201069064." evidence="5">
    <original>R</original>
    <variation>C</variation>
    <location>
        <position position="140"/>
    </location>
</feature>
<feature type="sequence variant" id="VAR_063205" description="In GLC1O; uncertain significance; dbSNP:rs121918428." evidence="4">
    <original>R</original>
    <variation>Q</variation>
    <location>
        <position position="206"/>
    </location>
</feature>
<feature type="sequence variant" id="VAR_063206" description="In GLC1O; impaired ligand-mediated TRKB signaling and reduced neurite outgrowth; dbSNP:rs121918427." evidence="4 5">
    <original>R</original>
    <variation>W</variation>
    <location>
        <position position="206"/>
    </location>
</feature>
<feature type="sequence variant" id="VAR_063207" description="In dbSNP:rs371861346." evidence="5">
    <original>T</original>
    <variation>I</variation>
    <location>
        <position position="207"/>
    </location>
</feature>
<feature type="sequence variant" id="VAR_063208" evidence="4">
    <original>T</original>
    <variation>S</variation>
    <location>
        <position position="207"/>
    </location>
</feature>
<feature type="sequence variant" id="VAR_063209" description="In GLC1O; uncertain significance; dbSNP:rs200675509." evidence="4">
    <original>R</original>
    <variation>G</variation>
    <location>
        <position position="209"/>
    </location>
</feature>
<feature type="strand" evidence="8">
    <location>
        <begin position="83"/>
        <end position="85"/>
    </location>
</feature>
<feature type="helix" evidence="8">
    <location>
        <begin position="88"/>
        <end position="90"/>
    </location>
</feature>
<feature type="strand" evidence="8">
    <location>
        <begin position="94"/>
        <end position="97"/>
    </location>
</feature>
<feature type="strand" evidence="8">
    <location>
        <begin position="99"/>
        <end position="104"/>
    </location>
</feature>
<feature type="strand" evidence="8">
    <location>
        <begin position="109"/>
        <end position="112"/>
    </location>
</feature>
<feature type="strand" evidence="8">
    <location>
        <begin position="117"/>
        <end position="120"/>
    </location>
</feature>
<feature type="strand" evidence="8">
    <location>
        <begin position="122"/>
        <end position="125"/>
    </location>
</feature>
<feature type="strand" evidence="8">
    <location>
        <begin position="127"/>
        <end position="133"/>
    </location>
</feature>
<feature type="strand" evidence="8">
    <location>
        <begin position="136"/>
        <end position="141"/>
    </location>
</feature>
<feature type="turn" evidence="7">
    <location>
        <begin position="146"/>
        <end position="148"/>
    </location>
</feature>
<feature type="strand" evidence="8">
    <location>
        <begin position="153"/>
        <end position="156"/>
    </location>
</feature>
<feature type="turn" evidence="8">
    <location>
        <begin position="163"/>
        <end position="165"/>
    </location>
</feature>
<feature type="strand" evidence="8">
    <location>
        <begin position="166"/>
        <end position="182"/>
    </location>
</feature>
<feature type="strand" evidence="7">
    <location>
        <begin position="184"/>
        <end position="186"/>
    </location>
</feature>
<feature type="strand" evidence="8">
    <location>
        <begin position="188"/>
        <end position="205"/>
    </location>
</feature>